<comment type="function">
    <text evidence="1">Catalyzes the hydrolytic deamination of adenosine and 2-deoxyadenosine.</text>
</comment>
<comment type="catalytic activity">
    <reaction evidence="1">
        <text>adenosine + H2O + H(+) = inosine + NH4(+)</text>
        <dbReference type="Rhea" id="RHEA:24408"/>
        <dbReference type="ChEBI" id="CHEBI:15377"/>
        <dbReference type="ChEBI" id="CHEBI:15378"/>
        <dbReference type="ChEBI" id="CHEBI:16335"/>
        <dbReference type="ChEBI" id="CHEBI:17596"/>
        <dbReference type="ChEBI" id="CHEBI:28938"/>
        <dbReference type="EC" id="3.5.4.4"/>
    </reaction>
    <physiologicalReaction direction="left-to-right" evidence="1">
        <dbReference type="Rhea" id="RHEA:24409"/>
    </physiologicalReaction>
</comment>
<comment type="catalytic activity">
    <reaction evidence="1">
        <text>2'-deoxyadenosine + H2O + H(+) = 2'-deoxyinosine + NH4(+)</text>
        <dbReference type="Rhea" id="RHEA:28190"/>
        <dbReference type="ChEBI" id="CHEBI:15377"/>
        <dbReference type="ChEBI" id="CHEBI:15378"/>
        <dbReference type="ChEBI" id="CHEBI:17256"/>
        <dbReference type="ChEBI" id="CHEBI:28938"/>
        <dbReference type="ChEBI" id="CHEBI:28997"/>
        <dbReference type="EC" id="3.5.4.4"/>
    </reaction>
    <physiologicalReaction direction="left-to-right" evidence="1">
        <dbReference type="Rhea" id="RHEA:28191"/>
    </physiologicalReaction>
</comment>
<comment type="cofactor">
    <cofactor evidence="1">
        <name>Zn(2+)</name>
        <dbReference type="ChEBI" id="CHEBI:29105"/>
    </cofactor>
    <text evidence="1">Binds 1 zinc ion per subunit.</text>
</comment>
<comment type="similarity">
    <text evidence="1">Belongs to the metallo-dependent hydrolases superfamily. Adenosine and AMP deaminases family. Adenosine deaminase subfamily.</text>
</comment>
<feature type="chain" id="PRO_1000146575" description="Adenosine deaminase">
    <location>
        <begin position="1"/>
        <end position="333"/>
    </location>
</feature>
<feature type="active site" description="Proton donor" evidence="1">
    <location>
        <position position="200"/>
    </location>
</feature>
<feature type="binding site" evidence="1">
    <location>
        <position position="12"/>
    </location>
    <ligand>
        <name>Zn(2+)</name>
        <dbReference type="ChEBI" id="CHEBI:29105"/>
        <note>catalytic</note>
    </ligand>
</feature>
<feature type="binding site" evidence="1">
    <location>
        <position position="14"/>
    </location>
    <ligand>
        <name>substrate</name>
    </ligand>
</feature>
<feature type="binding site" evidence="1">
    <location>
        <position position="14"/>
    </location>
    <ligand>
        <name>Zn(2+)</name>
        <dbReference type="ChEBI" id="CHEBI:29105"/>
        <note>catalytic</note>
    </ligand>
</feature>
<feature type="binding site" evidence="1">
    <location>
        <position position="16"/>
    </location>
    <ligand>
        <name>substrate</name>
    </ligand>
</feature>
<feature type="binding site" evidence="1">
    <location>
        <position position="170"/>
    </location>
    <ligand>
        <name>substrate</name>
    </ligand>
</feature>
<feature type="binding site" evidence="1">
    <location>
        <position position="197"/>
    </location>
    <ligand>
        <name>Zn(2+)</name>
        <dbReference type="ChEBI" id="CHEBI:29105"/>
        <note>catalytic</note>
    </ligand>
</feature>
<feature type="binding site" evidence="1">
    <location>
        <position position="278"/>
    </location>
    <ligand>
        <name>Zn(2+)</name>
        <dbReference type="ChEBI" id="CHEBI:29105"/>
        <note>catalytic</note>
    </ligand>
</feature>
<feature type="binding site" evidence="1">
    <location>
        <position position="279"/>
    </location>
    <ligand>
        <name>substrate</name>
    </ligand>
</feature>
<feature type="site" description="Important for catalytic activity" evidence="1">
    <location>
        <position position="221"/>
    </location>
</feature>
<proteinExistence type="inferred from homology"/>
<evidence type="ECO:0000255" key="1">
    <source>
        <dbReference type="HAMAP-Rule" id="MF_00540"/>
    </source>
</evidence>
<sequence>MIDITLPLTDIHRHLDGNIRAQTILDLGRQFNIALPAKTLEALIPHVQVTSTEPDLVSFLTKLDWGVKVLASLDACRRVAFENIEDAARNGLHYVELRFSPGYMAMAHQLPIAGVVEAVIDGVRDGCNTFGVEARLIGIMSRTFGEAACLQELDALLAHREKITALDLAGDELGFPGSLFLSHFNRARDAGWHITVHAGEAAGPESIWQAIRELGAERIGHGVKAVEDRALMDFLAQQRIGIESCLTSNIQTSTVASLADHPLKTFLEHGVLASLNTDDPAVQGVDIIHEYHVAAPAAGLSREQIRQAQINGLEIAFLSDGEKRALREKVAAA</sequence>
<accession>C0Q502</accession>
<gene>
    <name evidence="1" type="primary">add</name>
    <name type="ordered locus">SPC_2268</name>
</gene>
<dbReference type="EC" id="3.5.4.4" evidence="1"/>
<dbReference type="EMBL" id="CP000857">
    <property type="protein sequence ID" value="ACN46385.1"/>
    <property type="molecule type" value="Genomic_DNA"/>
</dbReference>
<dbReference type="RefSeq" id="WP_000565555.1">
    <property type="nucleotide sequence ID" value="NC_012125.1"/>
</dbReference>
<dbReference type="SMR" id="C0Q502"/>
<dbReference type="KEGG" id="sei:SPC_2268"/>
<dbReference type="HOGENOM" id="CLU_039228_0_2_6"/>
<dbReference type="Proteomes" id="UP000001599">
    <property type="component" value="Chromosome"/>
</dbReference>
<dbReference type="GO" id="GO:0005829">
    <property type="term" value="C:cytosol"/>
    <property type="evidence" value="ECO:0007669"/>
    <property type="project" value="TreeGrafter"/>
</dbReference>
<dbReference type="GO" id="GO:0046936">
    <property type="term" value="F:2'-deoxyadenosine deaminase activity"/>
    <property type="evidence" value="ECO:0007669"/>
    <property type="project" value="RHEA"/>
</dbReference>
<dbReference type="GO" id="GO:0004000">
    <property type="term" value="F:adenosine deaminase activity"/>
    <property type="evidence" value="ECO:0007669"/>
    <property type="project" value="UniProtKB-UniRule"/>
</dbReference>
<dbReference type="GO" id="GO:0008270">
    <property type="term" value="F:zinc ion binding"/>
    <property type="evidence" value="ECO:0007669"/>
    <property type="project" value="UniProtKB-UniRule"/>
</dbReference>
<dbReference type="GO" id="GO:0006154">
    <property type="term" value="P:adenosine catabolic process"/>
    <property type="evidence" value="ECO:0007669"/>
    <property type="project" value="TreeGrafter"/>
</dbReference>
<dbReference type="GO" id="GO:0043103">
    <property type="term" value="P:hypoxanthine salvage"/>
    <property type="evidence" value="ECO:0007669"/>
    <property type="project" value="TreeGrafter"/>
</dbReference>
<dbReference type="GO" id="GO:0046103">
    <property type="term" value="P:inosine biosynthetic process"/>
    <property type="evidence" value="ECO:0007669"/>
    <property type="project" value="TreeGrafter"/>
</dbReference>
<dbReference type="GO" id="GO:0009117">
    <property type="term" value="P:nucleotide metabolic process"/>
    <property type="evidence" value="ECO:0007669"/>
    <property type="project" value="UniProtKB-KW"/>
</dbReference>
<dbReference type="GO" id="GO:0009168">
    <property type="term" value="P:purine ribonucleoside monophosphate biosynthetic process"/>
    <property type="evidence" value="ECO:0007669"/>
    <property type="project" value="UniProtKB-UniRule"/>
</dbReference>
<dbReference type="CDD" id="cd01320">
    <property type="entry name" value="ADA"/>
    <property type="match status" value="1"/>
</dbReference>
<dbReference type="FunFam" id="3.20.20.140:FF:000009">
    <property type="entry name" value="Adenosine deaminase"/>
    <property type="match status" value="1"/>
</dbReference>
<dbReference type="Gene3D" id="3.20.20.140">
    <property type="entry name" value="Metal-dependent hydrolases"/>
    <property type="match status" value="1"/>
</dbReference>
<dbReference type="HAMAP" id="MF_00540">
    <property type="entry name" value="A_deaminase"/>
    <property type="match status" value="1"/>
</dbReference>
<dbReference type="InterPro" id="IPR006650">
    <property type="entry name" value="A/AMP_deam_AS"/>
</dbReference>
<dbReference type="InterPro" id="IPR028893">
    <property type="entry name" value="A_deaminase"/>
</dbReference>
<dbReference type="InterPro" id="IPR001365">
    <property type="entry name" value="A_deaminase_dom"/>
</dbReference>
<dbReference type="InterPro" id="IPR006330">
    <property type="entry name" value="Ado/ade_deaminase"/>
</dbReference>
<dbReference type="InterPro" id="IPR032466">
    <property type="entry name" value="Metal_Hydrolase"/>
</dbReference>
<dbReference type="NCBIfam" id="TIGR01430">
    <property type="entry name" value="aden_deam"/>
    <property type="match status" value="1"/>
</dbReference>
<dbReference type="NCBIfam" id="NF006846">
    <property type="entry name" value="PRK09358.1-1"/>
    <property type="match status" value="1"/>
</dbReference>
<dbReference type="PANTHER" id="PTHR11409">
    <property type="entry name" value="ADENOSINE DEAMINASE"/>
    <property type="match status" value="1"/>
</dbReference>
<dbReference type="PANTHER" id="PTHR11409:SF43">
    <property type="entry name" value="ADENOSINE DEAMINASE"/>
    <property type="match status" value="1"/>
</dbReference>
<dbReference type="Pfam" id="PF00962">
    <property type="entry name" value="A_deaminase"/>
    <property type="match status" value="1"/>
</dbReference>
<dbReference type="SUPFAM" id="SSF51556">
    <property type="entry name" value="Metallo-dependent hydrolases"/>
    <property type="match status" value="1"/>
</dbReference>
<dbReference type="PROSITE" id="PS00485">
    <property type="entry name" value="A_DEAMINASE"/>
    <property type="match status" value="1"/>
</dbReference>
<protein>
    <recommendedName>
        <fullName evidence="1">Adenosine deaminase</fullName>
        <ecNumber evidence="1">3.5.4.4</ecNumber>
    </recommendedName>
    <alternativeName>
        <fullName evidence="1">Adenosine aminohydrolase</fullName>
    </alternativeName>
</protein>
<name>ADD_SALPC</name>
<reference key="1">
    <citation type="journal article" date="2009" name="PLoS ONE">
        <title>Salmonella paratyphi C: genetic divergence from Salmonella choleraesuis and pathogenic convergence with Salmonella typhi.</title>
        <authorList>
            <person name="Liu W.-Q."/>
            <person name="Feng Y."/>
            <person name="Wang Y."/>
            <person name="Zou Q.-H."/>
            <person name="Chen F."/>
            <person name="Guo J.-T."/>
            <person name="Peng Y.-H."/>
            <person name="Jin Y."/>
            <person name="Li Y.-G."/>
            <person name="Hu S.-N."/>
            <person name="Johnston R.N."/>
            <person name="Liu G.-R."/>
            <person name="Liu S.-L."/>
        </authorList>
    </citation>
    <scope>NUCLEOTIDE SEQUENCE [LARGE SCALE GENOMIC DNA]</scope>
    <source>
        <strain>RKS4594</strain>
    </source>
</reference>
<organism>
    <name type="scientific">Salmonella paratyphi C (strain RKS4594)</name>
    <dbReference type="NCBI Taxonomy" id="476213"/>
    <lineage>
        <taxon>Bacteria</taxon>
        <taxon>Pseudomonadati</taxon>
        <taxon>Pseudomonadota</taxon>
        <taxon>Gammaproteobacteria</taxon>
        <taxon>Enterobacterales</taxon>
        <taxon>Enterobacteriaceae</taxon>
        <taxon>Salmonella</taxon>
    </lineage>
</organism>
<keyword id="KW-0378">Hydrolase</keyword>
<keyword id="KW-0479">Metal-binding</keyword>
<keyword id="KW-0546">Nucleotide metabolism</keyword>
<keyword id="KW-0862">Zinc</keyword>